<feature type="chain" id="PRO_0000298660" description="Uncharacterized protein SSP0869">
    <location>
        <begin position="1"/>
        <end position="345"/>
    </location>
</feature>
<gene>
    <name type="ordered locus">SSP0869</name>
</gene>
<sequence>MTTTGYIGTYTKKEGKGVYRFQLDEETGKITEVKTGYELEASTYVNQHNHFLYAVTKEGDDCGIASLKIESDGTLSLINKCLASTAGNGCYVSASPDGKYIFEAIYGAGLARIYEANPETGEIVRLIQELAHDYPTGPSERQEQPHVHYLNTTPDEKYVVAMDLGTDKVITYEYGDDGLKVYDTIEFEPGDGPRHITFHENGKHAYVVHELSNIVSTLKYENGHFTEIERHLTIPENFDGDTKLAAVRISHDQNFLYISNRGHDSLAIFKVGDEGATISLVDIVKSGGEFPRDFNITESDDYLVCAHQEGDYALTVFKRDKVTGNIEIVDNQETAPEGVCVQFLR</sequence>
<reference key="1">
    <citation type="journal article" date="2005" name="Proc. Natl. Acad. Sci. U.S.A.">
        <title>Whole genome sequence of Staphylococcus saprophyticus reveals the pathogenesis of uncomplicated urinary tract infection.</title>
        <authorList>
            <person name="Kuroda M."/>
            <person name="Yamashita A."/>
            <person name="Hirakawa H."/>
            <person name="Kumano M."/>
            <person name="Morikawa K."/>
            <person name="Higashide M."/>
            <person name="Maruyama A."/>
            <person name="Inose Y."/>
            <person name="Matoba K."/>
            <person name="Toh H."/>
            <person name="Kuhara S."/>
            <person name="Hattori M."/>
            <person name="Ohta T."/>
        </authorList>
    </citation>
    <scope>NUCLEOTIDE SEQUENCE [LARGE SCALE GENOMIC DNA]</scope>
    <source>
        <strain>ATCC 15305 / DSM 20229 / NCIMB 8711 / NCTC 7292 / S-41</strain>
    </source>
</reference>
<proteinExistence type="inferred from homology"/>
<evidence type="ECO:0000305" key="1"/>
<protein>
    <recommendedName>
        <fullName>Uncharacterized protein SSP0869</fullName>
    </recommendedName>
</protein>
<organism>
    <name type="scientific">Staphylococcus saprophyticus subsp. saprophyticus (strain ATCC 15305 / DSM 20229 / NCIMB 8711 / NCTC 7292 / S-41)</name>
    <dbReference type="NCBI Taxonomy" id="342451"/>
    <lineage>
        <taxon>Bacteria</taxon>
        <taxon>Bacillati</taxon>
        <taxon>Bacillota</taxon>
        <taxon>Bacilli</taxon>
        <taxon>Bacillales</taxon>
        <taxon>Staphylococcaceae</taxon>
        <taxon>Staphylococcus</taxon>
    </lineage>
</organism>
<accession>Q49YW6</accession>
<dbReference type="EMBL" id="AP008934">
    <property type="protein sequence ID" value="BAE18014.1"/>
    <property type="molecule type" value="Genomic_DNA"/>
</dbReference>
<dbReference type="RefSeq" id="WP_011302748.1">
    <property type="nucleotide sequence ID" value="NC_007350.1"/>
</dbReference>
<dbReference type="SMR" id="Q49YW6"/>
<dbReference type="GeneID" id="3617065"/>
<dbReference type="KEGG" id="ssp:SSP0869"/>
<dbReference type="PATRIC" id="fig|342451.11.peg.869"/>
<dbReference type="eggNOG" id="COG2706">
    <property type="taxonomic scope" value="Bacteria"/>
</dbReference>
<dbReference type="HOGENOM" id="CLU_038716_3_0_9"/>
<dbReference type="OrthoDB" id="9790815at2"/>
<dbReference type="Proteomes" id="UP000006371">
    <property type="component" value="Chromosome"/>
</dbReference>
<dbReference type="GO" id="GO:0005829">
    <property type="term" value="C:cytosol"/>
    <property type="evidence" value="ECO:0007669"/>
    <property type="project" value="TreeGrafter"/>
</dbReference>
<dbReference type="GO" id="GO:0017057">
    <property type="term" value="F:6-phosphogluconolactonase activity"/>
    <property type="evidence" value="ECO:0007669"/>
    <property type="project" value="TreeGrafter"/>
</dbReference>
<dbReference type="Gene3D" id="2.130.10.10">
    <property type="entry name" value="YVTN repeat-like/Quinoprotein amine dehydrogenase"/>
    <property type="match status" value="1"/>
</dbReference>
<dbReference type="InterPro" id="IPR050282">
    <property type="entry name" value="Cycloisomerase_2"/>
</dbReference>
<dbReference type="InterPro" id="IPR011048">
    <property type="entry name" value="Haem_d1_sf"/>
</dbReference>
<dbReference type="InterPro" id="IPR019405">
    <property type="entry name" value="Lactonase_7-beta_prop"/>
</dbReference>
<dbReference type="InterPro" id="IPR015943">
    <property type="entry name" value="WD40/YVTN_repeat-like_dom_sf"/>
</dbReference>
<dbReference type="PANTHER" id="PTHR30344:SF1">
    <property type="entry name" value="6-PHOSPHOGLUCONOLACTONASE"/>
    <property type="match status" value="1"/>
</dbReference>
<dbReference type="PANTHER" id="PTHR30344">
    <property type="entry name" value="6-PHOSPHOGLUCONOLACTONASE-RELATED"/>
    <property type="match status" value="1"/>
</dbReference>
<dbReference type="Pfam" id="PF10282">
    <property type="entry name" value="Lactonase"/>
    <property type="match status" value="1"/>
</dbReference>
<dbReference type="SUPFAM" id="SSF51004">
    <property type="entry name" value="C-terminal (heme d1) domain of cytochrome cd1-nitrite reductase"/>
    <property type="match status" value="1"/>
</dbReference>
<keyword id="KW-1185">Reference proteome</keyword>
<name>Y869_STAS1</name>
<comment type="similarity">
    <text evidence="1">Belongs to the cycloisomerase 2 family.</text>
</comment>